<feature type="chain" id="PRO_1000138436" description="Cell division protein ZapB">
    <location>
        <begin position="1"/>
        <end position="79"/>
    </location>
</feature>
<feature type="region of interest" description="Disordered" evidence="2">
    <location>
        <begin position="34"/>
        <end position="65"/>
    </location>
</feature>
<feature type="coiled-coil region" evidence="1">
    <location>
        <begin position="3"/>
        <end position="79"/>
    </location>
</feature>
<feature type="compositionally biased region" description="Polar residues" evidence="2">
    <location>
        <begin position="35"/>
        <end position="45"/>
    </location>
</feature>
<feature type="compositionally biased region" description="Basic and acidic residues" evidence="2">
    <location>
        <begin position="46"/>
        <end position="60"/>
    </location>
</feature>
<feature type="modified residue" description="N6-acetyllysine" evidence="1">
    <location>
        <position position="8"/>
    </location>
</feature>
<organism>
    <name type="scientific">Escherichia coli (strain SE11)</name>
    <dbReference type="NCBI Taxonomy" id="409438"/>
    <lineage>
        <taxon>Bacteria</taxon>
        <taxon>Pseudomonadati</taxon>
        <taxon>Pseudomonadota</taxon>
        <taxon>Gammaproteobacteria</taxon>
        <taxon>Enterobacterales</taxon>
        <taxon>Enterobacteriaceae</taxon>
        <taxon>Escherichia</taxon>
    </lineage>
</organism>
<gene>
    <name evidence="1" type="primary">zapB</name>
    <name type="ordered locus">ECSE_4217</name>
</gene>
<dbReference type="EMBL" id="AP009240">
    <property type="protein sequence ID" value="BAG79741.1"/>
    <property type="molecule type" value="Genomic_DNA"/>
</dbReference>
<dbReference type="SMR" id="B6I4S1"/>
<dbReference type="KEGG" id="ecy:ECSE_4217"/>
<dbReference type="HOGENOM" id="CLU_171174_2_0_6"/>
<dbReference type="Proteomes" id="UP000008199">
    <property type="component" value="Chromosome"/>
</dbReference>
<dbReference type="GO" id="GO:0005737">
    <property type="term" value="C:cytoplasm"/>
    <property type="evidence" value="ECO:0007669"/>
    <property type="project" value="UniProtKB-SubCell"/>
</dbReference>
<dbReference type="GO" id="GO:0000917">
    <property type="term" value="P:division septum assembly"/>
    <property type="evidence" value="ECO:0007669"/>
    <property type="project" value="UniProtKB-KW"/>
</dbReference>
<dbReference type="GO" id="GO:0043093">
    <property type="term" value="P:FtsZ-dependent cytokinesis"/>
    <property type="evidence" value="ECO:0007669"/>
    <property type="project" value="UniProtKB-UniRule"/>
</dbReference>
<dbReference type="FunFam" id="1.20.5.340:FF:000014">
    <property type="entry name" value="Cell division protein ZapB"/>
    <property type="match status" value="1"/>
</dbReference>
<dbReference type="Gene3D" id="1.20.5.340">
    <property type="match status" value="1"/>
</dbReference>
<dbReference type="HAMAP" id="MF_01196">
    <property type="entry name" value="ZapB"/>
    <property type="match status" value="1"/>
</dbReference>
<dbReference type="InterPro" id="IPR009252">
    <property type="entry name" value="Cell_div_ZapB"/>
</dbReference>
<dbReference type="NCBIfam" id="NF011951">
    <property type="entry name" value="PRK15422.1"/>
    <property type="match status" value="1"/>
</dbReference>
<dbReference type="Pfam" id="PF06005">
    <property type="entry name" value="ZapB"/>
    <property type="match status" value="1"/>
</dbReference>
<name>ZAPB_ECOSE</name>
<proteinExistence type="inferred from homology"/>
<reference key="1">
    <citation type="journal article" date="2008" name="DNA Res.">
        <title>Complete genome sequence and comparative analysis of the wild-type commensal Escherichia coli strain SE11 isolated from a healthy adult.</title>
        <authorList>
            <person name="Oshima K."/>
            <person name="Toh H."/>
            <person name="Ogura Y."/>
            <person name="Sasamoto H."/>
            <person name="Morita H."/>
            <person name="Park S.-H."/>
            <person name="Ooka T."/>
            <person name="Iyoda S."/>
            <person name="Taylor T.D."/>
            <person name="Hayashi T."/>
            <person name="Itoh K."/>
            <person name="Hattori M."/>
        </authorList>
    </citation>
    <scope>NUCLEOTIDE SEQUENCE [LARGE SCALE GENOMIC DNA]</scope>
    <source>
        <strain>SE11</strain>
    </source>
</reference>
<protein>
    <recommendedName>
        <fullName evidence="1">Cell division protein ZapB</fullName>
    </recommendedName>
</protein>
<keyword id="KW-0007">Acetylation</keyword>
<keyword id="KW-0131">Cell cycle</keyword>
<keyword id="KW-0132">Cell division</keyword>
<keyword id="KW-0175">Coiled coil</keyword>
<keyword id="KW-0963">Cytoplasm</keyword>
<keyword id="KW-0717">Septation</keyword>
<accession>B6I4S1</accession>
<comment type="function">
    <text evidence="1">Non-essential, abundant cell division factor that is required for proper Z-ring formation. It is recruited early to the divisome by direct interaction with FtsZ, stimulating Z-ring assembly and thereby promoting cell division earlier in the cell cycle. Its recruitment to the Z-ring requires functional FtsA or ZipA.</text>
</comment>
<comment type="subunit">
    <text evidence="1">Homodimer. The ends of the coiled-coil dimer bind to each other, forming polymers. Interacts with FtsZ.</text>
</comment>
<comment type="subcellular location">
    <subcellularLocation>
        <location evidence="1">Cytoplasm</location>
    </subcellularLocation>
    <text evidence="1">Localizes to the septum at mid-cell, in a FtsZ-like pattern.</text>
</comment>
<comment type="similarity">
    <text evidence="1">Belongs to the ZapB family.</text>
</comment>
<evidence type="ECO:0000255" key="1">
    <source>
        <dbReference type="HAMAP-Rule" id="MF_01196"/>
    </source>
</evidence>
<evidence type="ECO:0000256" key="2">
    <source>
        <dbReference type="SAM" id="MobiDB-lite"/>
    </source>
</evidence>
<sequence>MSLEVFEKLEAKVQQAIDTITLLQMEIEELKEKNNSLSQEVQNAQHQREELERENNHLKEQQNGWQERLQALLGRMEEV</sequence>